<dbReference type="EC" id="2.4.1.21" evidence="1"/>
<dbReference type="EMBL" id="CP001138">
    <property type="protein sequence ID" value="ACH49360.1"/>
    <property type="molecule type" value="Genomic_DNA"/>
</dbReference>
<dbReference type="RefSeq" id="WP_001197669.1">
    <property type="nucleotide sequence ID" value="NC_011149.1"/>
</dbReference>
<dbReference type="SMR" id="B5F8Q1"/>
<dbReference type="CAZy" id="GT5">
    <property type="family name" value="Glycosyltransferase Family 5"/>
</dbReference>
<dbReference type="KEGG" id="sea:SeAg_B3736"/>
<dbReference type="HOGENOM" id="CLU_009583_18_4_6"/>
<dbReference type="UniPathway" id="UPA00164"/>
<dbReference type="Proteomes" id="UP000008819">
    <property type="component" value="Chromosome"/>
</dbReference>
<dbReference type="GO" id="GO:0005829">
    <property type="term" value="C:cytosol"/>
    <property type="evidence" value="ECO:0007669"/>
    <property type="project" value="TreeGrafter"/>
</dbReference>
<dbReference type="GO" id="GO:0009011">
    <property type="term" value="F:alpha-1,4-glucan glucosyltransferase (ADP-glucose donor) activity"/>
    <property type="evidence" value="ECO:0007669"/>
    <property type="project" value="UniProtKB-UniRule"/>
</dbReference>
<dbReference type="GO" id="GO:0004373">
    <property type="term" value="F:alpha-1,4-glucan glucosyltransferase (UDP-glucose donor) activity"/>
    <property type="evidence" value="ECO:0007669"/>
    <property type="project" value="InterPro"/>
</dbReference>
<dbReference type="GO" id="GO:0005978">
    <property type="term" value="P:glycogen biosynthetic process"/>
    <property type="evidence" value="ECO:0007669"/>
    <property type="project" value="UniProtKB-UniRule"/>
</dbReference>
<dbReference type="CDD" id="cd03791">
    <property type="entry name" value="GT5_Glycogen_synthase_DULL1-like"/>
    <property type="match status" value="1"/>
</dbReference>
<dbReference type="FunFam" id="3.40.50.2000:FF:000008">
    <property type="entry name" value="Glycogen synthase"/>
    <property type="match status" value="1"/>
</dbReference>
<dbReference type="FunFam" id="3.40.50.2000:FF:000011">
    <property type="entry name" value="Glycogen synthase"/>
    <property type="match status" value="1"/>
</dbReference>
<dbReference type="Gene3D" id="3.40.50.2000">
    <property type="entry name" value="Glycogen Phosphorylase B"/>
    <property type="match status" value="2"/>
</dbReference>
<dbReference type="HAMAP" id="MF_00484">
    <property type="entry name" value="Glycogen_synth"/>
    <property type="match status" value="1"/>
</dbReference>
<dbReference type="InterPro" id="IPR001296">
    <property type="entry name" value="Glyco_trans_1"/>
</dbReference>
<dbReference type="InterPro" id="IPR011835">
    <property type="entry name" value="GS/SS"/>
</dbReference>
<dbReference type="InterPro" id="IPR013534">
    <property type="entry name" value="Starch_synth_cat_dom"/>
</dbReference>
<dbReference type="NCBIfam" id="TIGR02095">
    <property type="entry name" value="glgA"/>
    <property type="match status" value="1"/>
</dbReference>
<dbReference type="NCBIfam" id="NF001899">
    <property type="entry name" value="PRK00654.1-2"/>
    <property type="match status" value="1"/>
</dbReference>
<dbReference type="PANTHER" id="PTHR45825:SF11">
    <property type="entry name" value="ALPHA AMYLASE DOMAIN-CONTAINING PROTEIN"/>
    <property type="match status" value="1"/>
</dbReference>
<dbReference type="PANTHER" id="PTHR45825">
    <property type="entry name" value="GRANULE-BOUND STARCH SYNTHASE 1, CHLOROPLASTIC/AMYLOPLASTIC"/>
    <property type="match status" value="1"/>
</dbReference>
<dbReference type="Pfam" id="PF08323">
    <property type="entry name" value="Glyco_transf_5"/>
    <property type="match status" value="1"/>
</dbReference>
<dbReference type="Pfam" id="PF00534">
    <property type="entry name" value="Glycos_transf_1"/>
    <property type="match status" value="1"/>
</dbReference>
<dbReference type="SUPFAM" id="SSF53756">
    <property type="entry name" value="UDP-Glycosyltransferase/glycogen phosphorylase"/>
    <property type="match status" value="1"/>
</dbReference>
<name>GLGA_SALA4</name>
<protein>
    <recommendedName>
        <fullName evidence="1">Glycogen synthase</fullName>
        <ecNumber evidence="1">2.4.1.21</ecNumber>
    </recommendedName>
    <alternativeName>
        <fullName evidence="1">Starch [bacterial glycogen] synthase</fullName>
    </alternativeName>
</protein>
<reference key="1">
    <citation type="journal article" date="2011" name="J. Bacteriol.">
        <title>Comparative genomics of 28 Salmonella enterica isolates: evidence for CRISPR-mediated adaptive sublineage evolution.</title>
        <authorList>
            <person name="Fricke W.F."/>
            <person name="Mammel M.K."/>
            <person name="McDermott P.F."/>
            <person name="Tartera C."/>
            <person name="White D.G."/>
            <person name="Leclerc J.E."/>
            <person name="Ravel J."/>
            <person name="Cebula T.A."/>
        </authorList>
    </citation>
    <scope>NUCLEOTIDE SEQUENCE [LARGE SCALE GENOMIC DNA]</scope>
    <source>
        <strain>SL483</strain>
    </source>
</reference>
<sequence length="477" mass="52946">MQVLHVCSEMFPLLKTGGLADVIGALPAAQIADGVDVRVLLPGFPDIRRGIPDAHVVSRRDTFAGKISLLFGHYNGVGIYLIDAPHLYERPGSPYHDTNLYAYTDNVLRFALLGWVGCEMACGLDPFWRPDVVHAHDWHAGLAPAYLAARGRPAKSVFTVHNLAYQGMFYAKHMDDIELPWSFFNMHGLEFNGQLSFLKAGLYYADHITAVSPTYAREITEPQFAYGMEGLLRQRHLEGRLSGILNGVDEKIWNPESDLLLASRYTRDTLEEKAENKRQLQIAMGLKVNDKVPLFAVVSRLTNQKGLDLVLEALPGLLEQGGQLALLGAGDPVLQEGFLAAAAEHPGQVGVQIGYHEAFSHRIMGGADVILVPSRFEPCGLTQLYGLKYGTLPLVRRTGGLADTVSDSSLENLADGIASGFVFEDSNAWSLLRAIRRAFVLWSRPSLWRFVQRQAMAMDFSWQVAAKSYRELYYRLK</sequence>
<organism>
    <name type="scientific">Salmonella agona (strain SL483)</name>
    <dbReference type="NCBI Taxonomy" id="454166"/>
    <lineage>
        <taxon>Bacteria</taxon>
        <taxon>Pseudomonadati</taxon>
        <taxon>Pseudomonadota</taxon>
        <taxon>Gammaproteobacteria</taxon>
        <taxon>Enterobacterales</taxon>
        <taxon>Enterobacteriaceae</taxon>
        <taxon>Salmonella</taxon>
    </lineage>
</organism>
<feature type="chain" id="PRO_1000126096" description="Glycogen synthase">
    <location>
        <begin position="1"/>
        <end position="477"/>
    </location>
</feature>
<feature type="binding site" evidence="1">
    <location>
        <position position="15"/>
    </location>
    <ligand>
        <name>ADP-alpha-D-glucose</name>
        <dbReference type="ChEBI" id="CHEBI:57498"/>
    </ligand>
</feature>
<evidence type="ECO:0000255" key="1">
    <source>
        <dbReference type="HAMAP-Rule" id="MF_00484"/>
    </source>
</evidence>
<gene>
    <name evidence="1" type="primary">glgA</name>
    <name type="ordered locus">SeAg_B3736</name>
</gene>
<comment type="function">
    <text evidence="1">Synthesizes alpha-1,4-glucan chains using ADP-glucose.</text>
</comment>
<comment type="catalytic activity">
    <reaction evidence="1">
        <text>[(1-&gt;4)-alpha-D-glucosyl](n) + ADP-alpha-D-glucose = [(1-&gt;4)-alpha-D-glucosyl](n+1) + ADP + H(+)</text>
        <dbReference type="Rhea" id="RHEA:18189"/>
        <dbReference type="Rhea" id="RHEA-COMP:9584"/>
        <dbReference type="Rhea" id="RHEA-COMP:9587"/>
        <dbReference type="ChEBI" id="CHEBI:15378"/>
        <dbReference type="ChEBI" id="CHEBI:15444"/>
        <dbReference type="ChEBI" id="CHEBI:57498"/>
        <dbReference type="ChEBI" id="CHEBI:456216"/>
        <dbReference type="EC" id="2.4.1.21"/>
    </reaction>
</comment>
<comment type="pathway">
    <text evidence="1">Glycan biosynthesis; glycogen biosynthesis.</text>
</comment>
<comment type="similarity">
    <text evidence="1">Belongs to the glycosyltransferase 1 family. Bacterial/plant glycogen synthase subfamily.</text>
</comment>
<keyword id="KW-0320">Glycogen biosynthesis</keyword>
<keyword id="KW-0328">Glycosyltransferase</keyword>
<keyword id="KW-0808">Transferase</keyword>
<proteinExistence type="inferred from homology"/>
<accession>B5F8Q1</accession>